<dbReference type="EC" id="2.1.1.12"/>
<dbReference type="EMBL" id="AB028870">
    <property type="protein sequence ID" value="BAA94795.1"/>
    <property type="molecule type" value="mRNA"/>
</dbReference>
<dbReference type="SMR" id="Q9MBC2"/>
<dbReference type="ExpressionAtlas" id="Q9MBC2">
    <property type="expression patterns" value="baseline and differential"/>
</dbReference>
<dbReference type="GO" id="GO:0005737">
    <property type="term" value="C:cytoplasm"/>
    <property type="evidence" value="ECO:0007669"/>
    <property type="project" value="UniProtKB-SubCell"/>
</dbReference>
<dbReference type="GO" id="GO:0030732">
    <property type="term" value="F:methionine S-methyltransferase activity"/>
    <property type="evidence" value="ECO:0007669"/>
    <property type="project" value="UniProtKB-EC"/>
</dbReference>
<dbReference type="GO" id="GO:0030170">
    <property type="term" value="F:pyridoxal phosphate binding"/>
    <property type="evidence" value="ECO:0007669"/>
    <property type="project" value="InterPro"/>
</dbReference>
<dbReference type="GO" id="GO:0009058">
    <property type="term" value="P:biosynthetic process"/>
    <property type="evidence" value="ECO:0007669"/>
    <property type="project" value="InterPro"/>
</dbReference>
<dbReference type="GO" id="GO:0032259">
    <property type="term" value="P:methylation"/>
    <property type="evidence" value="ECO:0007669"/>
    <property type="project" value="UniProtKB-KW"/>
</dbReference>
<dbReference type="CDD" id="cd02440">
    <property type="entry name" value="AdoMet_MTases"/>
    <property type="match status" value="1"/>
</dbReference>
<dbReference type="Gene3D" id="3.90.1150.10">
    <property type="entry name" value="Aspartate Aminotransferase, domain 1"/>
    <property type="match status" value="1"/>
</dbReference>
<dbReference type="Gene3D" id="3.40.640.10">
    <property type="entry name" value="Type I PLP-dependent aspartate aminotransferase-like (Major domain)"/>
    <property type="match status" value="1"/>
</dbReference>
<dbReference type="Gene3D" id="3.40.50.150">
    <property type="entry name" value="Vaccinia Virus protein VP39"/>
    <property type="match status" value="1"/>
</dbReference>
<dbReference type="InterPro" id="IPR004839">
    <property type="entry name" value="Aminotransferase_I/II_large"/>
</dbReference>
<dbReference type="InterPro" id="IPR025779">
    <property type="entry name" value="Met_S-MeTrfase"/>
</dbReference>
<dbReference type="InterPro" id="IPR015424">
    <property type="entry name" value="PyrdxlP-dep_Trfase"/>
</dbReference>
<dbReference type="InterPro" id="IPR015421">
    <property type="entry name" value="PyrdxlP-dep_Trfase_major"/>
</dbReference>
<dbReference type="InterPro" id="IPR015422">
    <property type="entry name" value="PyrdxlP-dep_Trfase_small"/>
</dbReference>
<dbReference type="InterPro" id="IPR029063">
    <property type="entry name" value="SAM-dependent_MTases_sf"/>
</dbReference>
<dbReference type="PANTHER" id="PTHR47087">
    <property type="entry name" value="METHIONINE S-METHYLTRANSFERASE"/>
    <property type="match status" value="1"/>
</dbReference>
<dbReference type="PANTHER" id="PTHR47087:SF1">
    <property type="entry name" value="METHIONINE S-METHYLTRANSFERASE"/>
    <property type="match status" value="1"/>
</dbReference>
<dbReference type="Pfam" id="PF00155">
    <property type="entry name" value="Aminotran_1_2"/>
    <property type="match status" value="1"/>
</dbReference>
<dbReference type="SUPFAM" id="SSF53383">
    <property type="entry name" value="PLP-dependent transferases"/>
    <property type="match status" value="2"/>
</dbReference>
<dbReference type="SUPFAM" id="SSF53335">
    <property type="entry name" value="S-adenosyl-L-methionine-dependent methyltransferases"/>
    <property type="match status" value="1"/>
</dbReference>
<dbReference type="PROSITE" id="PS51555">
    <property type="entry name" value="SAM_MT12"/>
    <property type="match status" value="1"/>
</dbReference>
<organism>
    <name type="scientific">Hordeum vulgare</name>
    <name type="common">Barley</name>
    <dbReference type="NCBI Taxonomy" id="4513"/>
    <lineage>
        <taxon>Eukaryota</taxon>
        <taxon>Viridiplantae</taxon>
        <taxon>Streptophyta</taxon>
        <taxon>Embryophyta</taxon>
        <taxon>Tracheophyta</taxon>
        <taxon>Spermatophyta</taxon>
        <taxon>Magnoliopsida</taxon>
        <taxon>Liliopsida</taxon>
        <taxon>Poales</taxon>
        <taxon>Poaceae</taxon>
        <taxon>BOP clade</taxon>
        <taxon>Pooideae</taxon>
        <taxon>Triticodae</taxon>
        <taxon>Triticeae</taxon>
        <taxon>Hordeinae</taxon>
        <taxon>Hordeum</taxon>
    </lineage>
</organism>
<gene>
    <name type="primary">MMT1</name>
    <name type="synonym">MMT</name>
</gene>
<protein>
    <recommendedName>
        <fullName>Methionine S-methyltransferase</fullName>
        <ecNumber>2.1.1.12</ecNumber>
    </recommendedName>
    <alternativeName>
        <fullName>AdoMet:Met S-methyltransferase</fullName>
    </alternativeName>
    <alternativeName>
        <fullName>Hv-MMT1</fullName>
    </alternativeName>
</protein>
<reference key="1">
    <citation type="submission" date="1999-06" db="EMBL/GenBank/DDBJ databases">
        <title>Cloning and expression studies of S-adenosyl-L-methionine:L-methionine S-methyltransferase (MMT) in germinating barley.</title>
        <authorList>
            <person name="Pimenta M."/>
            <person name="Kaneta T."/>
            <person name="Kamiya Y."/>
        </authorList>
    </citation>
    <scope>NUCLEOTIDE SEQUENCE [MRNA]</scope>
    <source>
        <strain>cv. Haruna Nijo</strain>
    </source>
</reference>
<reference key="2">
    <citation type="journal article" date="1998" name="Plant Physiol.">
        <title>S-adenosyl-L-methionine:L-methionine S-methyltransferase from germinating barley. Purification and localization.</title>
        <authorList>
            <person name="Pimenta M.J."/>
            <person name="Kaneta T."/>
            <person name="Larondelle Y."/>
            <person name="Dohmae N."/>
            <person name="Kamiya Y."/>
        </authorList>
    </citation>
    <scope>PROTEIN SEQUENCE OF 159-183</scope>
    <scope>ENZYME ACTIVITY</scope>
    <scope>TISSUE SPECIFICITY</scope>
</reference>
<name>MMT1_HORVU</name>
<feature type="chain" id="PRO_0000204461" description="Methionine S-methyltransferase">
    <location>
        <begin position="1"/>
        <end position="1088"/>
    </location>
</feature>
<proteinExistence type="evidence at protein level"/>
<evidence type="ECO:0000250" key="1"/>
<evidence type="ECO:0000269" key="2">
    <source>
    </source>
</evidence>
<evidence type="ECO:0000305" key="3"/>
<sequence length="1088" mass="119881">MAAAAGDVEAFLAACQASGDAAYGAAKAVLERLEAPATRAEARRLLGAVRRRFAAGGPAAGLECFRTFHFRIHDVVLDPHLQGFQQRKKLTMMEIPSIFIPEDWSFTFYEGLNRHPDSIFRDKTVAELGCGNGWISIALAEKWCPSKVYGLDINPRPIKIAWINLYLNALDDDGLPIYDAEGKTLLDRVEFYESDLLSYCRDNKIELDRIVGCIPQILNPNPEAMSKIVTENSSEEFLYSLSNYCALQGFVEDQFGLGLIARAVEEGISVIKPSGLMVFNMGGRPGQGVCERLFLRRGFRINKLWQTKIMQAADTDISALVEIEKNSRHRFEFFMDLVGDQPVCARTAWAYMKSGGRISHALSVYSCQLRQPNQVKKIFEFLKDGFHEVSSSLDLSFDDDSVADEKIPFLAYLASFLQENKSNPCEPPAGCLNFRNLVAGFMKSYHHIPLTPDNVVVFPSRAVAIENALRLFSPGLAIVDEHLTRHLPKQWLTSLAIEESNHAKDTVTVIEAPRQSDLLIELIRKLKPQVVVTGMAQFEAITSAAFVNLLSVTKDVGSRLLLDISEHLELSSLPSSNGVLKYLAGKTLPSHAAILCGLVKNQVYSDLEVAFAISEDPTVYKALSQTIELLEGHTSVISQHYYGCLFHELLAFQIGDRHPQQEREPAEVISKEMIGFSSSAMSTLEGAEFFVPGSMESGVIHMDLDRSFLPVPSAVNASIFESFVRQNITDSETDVRSSIQQLVKDSYGFSAGGASEIIYGNTCLALFNKLVLCCMQEQGTLLFPLGTNGHYVNAAKFVNATTLTIPTKADSGFKIEPSALADTLEKVSQPWVYISGPTINPTGFLYSDDDIAELLSVCATYGARVVIDTSSSGLEFQATGCSQWNLERCLSNVKSSKPSFSVVLLGELSFELTTAGLDFGFLIMSDSSLVDTFYSFPSLSRPHSTLKYTFRKLLGLKNQKDQHFSDLILEQKETLKNRADQLIKMLESCGWDAVGCHGGISMLAKPTAYIGKSLKVDGFEGKLDSHNMREALLRSTGLCISSSGWTGVPDYCRFSFALESGDFDRAMECIARFRELVLGGGAKVNGSN</sequence>
<keyword id="KW-0963">Cytoplasm</keyword>
<keyword id="KW-0903">Direct protein sequencing</keyword>
<keyword id="KW-0489">Methyltransferase</keyword>
<keyword id="KW-0949">S-adenosyl-L-methionine</keyword>
<keyword id="KW-0808">Transferase</keyword>
<accession>Q9MBC2</accession>
<comment type="function">
    <text>Catalyzes the S-methylmethionine (SMM) biosynthesis from adenosyl-L-homocysteine (AdoMet) and methionine. SMM biosynthesis (by MMT1) and degradation (by HMT-1, HMT-2 and HMT-3) constitute the SMM cycle in plants, which is probably required to achieve short term control of AdoMet level. Also able to catalyze the selenium-methylmethionine (SeMM) from AdoMet and selenium-methionine (SeMet). May play a role in phoem sulfur transport; such function is however not essential.</text>
</comment>
<comment type="catalytic activity">
    <reaction evidence="2">
        <text>L-methionine + S-adenosyl-L-methionine = S-methyl-L-methionine + S-adenosyl-L-homocysteine</text>
        <dbReference type="Rhea" id="RHEA:13761"/>
        <dbReference type="ChEBI" id="CHEBI:57844"/>
        <dbReference type="ChEBI" id="CHEBI:57856"/>
        <dbReference type="ChEBI" id="CHEBI:58252"/>
        <dbReference type="ChEBI" id="CHEBI:59789"/>
        <dbReference type="EC" id="2.1.1.12"/>
    </reaction>
</comment>
<comment type="subunit">
    <text evidence="1">Homotetramer.</text>
</comment>
<comment type="subcellular location">
    <subcellularLocation>
        <location evidence="1">Cytoplasm</location>
    </subcellularLocation>
</comment>
<comment type="tissue specificity">
    <text evidence="2">Expressed in the shoot, scutellum, and aleurone cells but not in the root or endosperm.</text>
</comment>
<comment type="developmental stage">
    <text>Increases during germination.</text>
</comment>
<comment type="similarity">
    <text evidence="3">Belongs to the class I-like SAM-binding methyltransferase superfamily.</text>
</comment>